<comment type="function">
    <text evidence="1">Probable transcription regulator that acts as a developmental regulator by promoting cell growth in response to light.</text>
</comment>
<comment type="subcellular location">
    <subcellularLocation>
        <location evidence="1">Nucleus</location>
    </subcellularLocation>
</comment>
<comment type="similarity">
    <text evidence="4">Belongs to the plant homeotic and developmental regulators ALOG protein family.</text>
</comment>
<protein>
    <recommendedName>
        <fullName>Protein G1-like6</fullName>
    </recommendedName>
</protein>
<keyword id="KW-0217">Developmental protein</keyword>
<keyword id="KW-0238">DNA-binding</keyword>
<keyword id="KW-0539">Nucleus</keyword>
<keyword id="KW-1185">Reference proteome</keyword>
<keyword id="KW-0804">Transcription</keyword>
<keyword id="KW-0805">Transcription regulation</keyword>
<proteinExistence type="inferred from homology"/>
<organism>
    <name type="scientific">Oryza sativa subsp. indica</name>
    <name type="common">Rice</name>
    <dbReference type="NCBI Taxonomy" id="39946"/>
    <lineage>
        <taxon>Eukaryota</taxon>
        <taxon>Viridiplantae</taxon>
        <taxon>Streptophyta</taxon>
        <taxon>Embryophyta</taxon>
        <taxon>Tracheophyta</taxon>
        <taxon>Spermatophyta</taxon>
        <taxon>Magnoliopsida</taxon>
        <taxon>Liliopsida</taxon>
        <taxon>Poales</taxon>
        <taxon>Poaceae</taxon>
        <taxon>BOP clade</taxon>
        <taxon>Oryzoideae</taxon>
        <taxon>Oryzeae</taxon>
        <taxon>Oryzinae</taxon>
        <taxon>Oryza</taxon>
        <taxon>Oryza sativa</taxon>
    </lineage>
</organism>
<name>G1L6_ORYSI</name>
<accession>A2XAV5</accession>
<feature type="chain" id="PRO_0000425309" description="Protein G1-like6">
    <location>
        <begin position="1"/>
        <end position="248"/>
    </location>
</feature>
<feature type="domain" description="ALOG" evidence="2">
    <location>
        <begin position="80"/>
        <end position="207"/>
    </location>
</feature>
<feature type="region of interest" description="Disordered" evidence="3">
    <location>
        <begin position="1"/>
        <end position="35"/>
    </location>
</feature>
<feature type="region of interest" description="Disordered" evidence="3">
    <location>
        <begin position="50"/>
        <end position="84"/>
    </location>
</feature>
<feature type="region of interest" description="Disordered" evidence="3">
    <location>
        <begin position="198"/>
        <end position="248"/>
    </location>
</feature>
<feature type="short sequence motif" description="Nuclear localization signal" evidence="1">
    <location>
        <begin position="205"/>
        <end position="209"/>
    </location>
</feature>
<feature type="compositionally biased region" description="Basic residues" evidence="3">
    <location>
        <begin position="1"/>
        <end position="15"/>
    </location>
</feature>
<feature type="compositionally biased region" description="Gly residues" evidence="3">
    <location>
        <begin position="17"/>
        <end position="32"/>
    </location>
</feature>
<feature type="compositionally biased region" description="Low complexity" evidence="3">
    <location>
        <begin position="50"/>
        <end position="59"/>
    </location>
</feature>
<feature type="compositionally biased region" description="Gly residues" evidence="3">
    <location>
        <begin position="60"/>
        <end position="69"/>
    </location>
</feature>
<feature type="compositionally biased region" description="Low complexity" evidence="3">
    <location>
        <begin position="70"/>
        <end position="79"/>
    </location>
</feature>
<feature type="compositionally biased region" description="Low complexity" evidence="3">
    <location>
        <begin position="212"/>
        <end position="224"/>
    </location>
</feature>
<feature type="compositionally biased region" description="Low complexity" evidence="3">
    <location>
        <begin position="239"/>
        <end position="248"/>
    </location>
</feature>
<evidence type="ECO:0000250" key="1"/>
<evidence type="ECO:0000255" key="2">
    <source>
        <dbReference type="PROSITE-ProRule" id="PRU01033"/>
    </source>
</evidence>
<evidence type="ECO:0000256" key="3">
    <source>
        <dbReference type="SAM" id="MobiDB-lite"/>
    </source>
</evidence>
<evidence type="ECO:0000305" key="4"/>
<sequence length="248" mass="25886">MDRHHHHHHHHHHHMMSGGGQDPAAGDGGAGGATQDSFFLGPAAAAMFSGAGSSSSGAGTSAGGGGGGPSPSSSSPSLSRYESQKRRDWNTFGQYLRNHRPPLSLSRCSGAHVLEFLKYMDQFGKTKVHTPVCPFYGHPNPPAPCPCPLRQAWGSLDALIGRLRAAYEENGGTPEMNPFGARAVRLYLREVRETQARARGISYEKKKRKKPSSAGAGAGPSSEGSPPPPGGSASGGGDTSASPQFIIP</sequence>
<dbReference type="EMBL" id="CM000127">
    <property type="protein sequence ID" value="EAY87965.1"/>
    <property type="molecule type" value="Genomic_DNA"/>
</dbReference>
<dbReference type="SMR" id="A2XAV5"/>
<dbReference type="STRING" id="39946.A2XAV5"/>
<dbReference type="EnsemblPlants" id="BGIOSGA005382-TA">
    <property type="protein sequence ID" value="BGIOSGA005382-PA"/>
    <property type="gene ID" value="BGIOSGA005382"/>
</dbReference>
<dbReference type="EnsemblPlants" id="OsGoSa_02g0037820.01">
    <property type="protein sequence ID" value="OsGoSa_02g0037820.01"/>
    <property type="gene ID" value="OsGoSa_02g0037820"/>
</dbReference>
<dbReference type="EnsemblPlants" id="OsIR64_02g0037490.01">
    <property type="protein sequence ID" value="OsIR64_02g0037490.01"/>
    <property type="gene ID" value="OsIR64_02g0037490"/>
</dbReference>
<dbReference type="EnsemblPlants" id="OsKYG_02g0037710.01">
    <property type="protein sequence ID" value="OsKYG_02g0037710.01"/>
    <property type="gene ID" value="OsKYG_02g0037710"/>
</dbReference>
<dbReference type="EnsemblPlants" id="OsLaMu_02g0037460.01">
    <property type="protein sequence ID" value="OsLaMu_02g0037460.01"/>
    <property type="gene ID" value="OsLaMu_02g0037460"/>
</dbReference>
<dbReference type="EnsemblPlants" id="OsLima_02g0037770.01">
    <property type="protein sequence ID" value="OsLima_02g0037770.01"/>
    <property type="gene ID" value="OsLima_02g0037770"/>
</dbReference>
<dbReference type="EnsemblPlants" id="OsLiXu_02g0037810.01">
    <property type="protein sequence ID" value="OsLiXu_02g0037810.01"/>
    <property type="gene ID" value="OsLiXu_02g0037810"/>
</dbReference>
<dbReference type="EnsemblPlants" id="OsMH63_02G038050_01">
    <property type="protein sequence ID" value="OsMH63_02G038050_01"/>
    <property type="gene ID" value="OsMH63_02G038050"/>
</dbReference>
<dbReference type="EnsemblPlants" id="OsPr106_02g0037810.01">
    <property type="protein sequence ID" value="OsPr106_02g0037810.01"/>
    <property type="gene ID" value="OsPr106_02g0037810"/>
</dbReference>
<dbReference type="EnsemblPlants" id="OsZS97_02G037470_01">
    <property type="protein sequence ID" value="OsZS97_02G037470_01"/>
    <property type="gene ID" value="OsZS97_02G037470"/>
</dbReference>
<dbReference type="Gramene" id="BGIOSGA005382-TA">
    <property type="protein sequence ID" value="BGIOSGA005382-PA"/>
    <property type="gene ID" value="BGIOSGA005382"/>
</dbReference>
<dbReference type="Gramene" id="OsGoSa_02g0037820.01">
    <property type="protein sequence ID" value="OsGoSa_02g0037820.01"/>
    <property type="gene ID" value="OsGoSa_02g0037820"/>
</dbReference>
<dbReference type="Gramene" id="OsIR64_02g0037490.01">
    <property type="protein sequence ID" value="OsIR64_02g0037490.01"/>
    <property type="gene ID" value="OsIR64_02g0037490"/>
</dbReference>
<dbReference type="Gramene" id="OsKYG_02g0037710.01">
    <property type="protein sequence ID" value="OsKYG_02g0037710.01"/>
    <property type="gene ID" value="OsKYG_02g0037710"/>
</dbReference>
<dbReference type="Gramene" id="OsLaMu_02g0037460.01">
    <property type="protein sequence ID" value="OsLaMu_02g0037460.01"/>
    <property type="gene ID" value="OsLaMu_02g0037460"/>
</dbReference>
<dbReference type="Gramene" id="OsLima_02g0037770.01">
    <property type="protein sequence ID" value="OsLima_02g0037770.01"/>
    <property type="gene ID" value="OsLima_02g0037770"/>
</dbReference>
<dbReference type="Gramene" id="OsLiXu_02g0037810.01">
    <property type="protein sequence ID" value="OsLiXu_02g0037810.01"/>
    <property type="gene ID" value="OsLiXu_02g0037810"/>
</dbReference>
<dbReference type="Gramene" id="OsMH63_02G038050_01">
    <property type="protein sequence ID" value="OsMH63_02G038050_01"/>
    <property type="gene ID" value="OsMH63_02G038050"/>
</dbReference>
<dbReference type="Gramene" id="OsPr106_02g0037810.01">
    <property type="protein sequence ID" value="OsPr106_02g0037810.01"/>
    <property type="gene ID" value="OsPr106_02g0037810"/>
</dbReference>
<dbReference type="Gramene" id="OsZS97_02G037470_01">
    <property type="protein sequence ID" value="OsZS97_02G037470_01"/>
    <property type="gene ID" value="OsZS97_02G037470"/>
</dbReference>
<dbReference type="HOGENOM" id="CLU_071168_3_0_1"/>
<dbReference type="OMA" id="ASPQFIM"/>
<dbReference type="OrthoDB" id="1906822at2759"/>
<dbReference type="Proteomes" id="UP000007015">
    <property type="component" value="Chromosome 2"/>
</dbReference>
<dbReference type="GO" id="GO:0005634">
    <property type="term" value="C:nucleus"/>
    <property type="evidence" value="ECO:0000250"/>
    <property type="project" value="UniProtKB"/>
</dbReference>
<dbReference type="GO" id="GO:0003677">
    <property type="term" value="F:DNA binding"/>
    <property type="evidence" value="ECO:0007669"/>
    <property type="project" value="UniProtKB-KW"/>
</dbReference>
<dbReference type="GO" id="GO:0009299">
    <property type="term" value="P:mRNA transcription"/>
    <property type="evidence" value="ECO:0000250"/>
    <property type="project" value="UniProtKB"/>
</dbReference>
<dbReference type="GO" id="GO:0090698">
    <property type="term" value="P:post-embryonic plant morphogenesis"/>
    <property type="evidence" value="ECO:0000250"/>
    <property type="project" value="UniProtKB"/>
</dbReference>
<dbReference type="GO" id="GO:0009416">
    <property type="term" value="P:response to light stimulus"/>
    <property type="evidence" value="ECO:0007669"/>
    <property type="project" value="TreeGrafter"/>
</dbReference>
<dbReference type="InterPro" id="IPR040222">
    <property type="entry name" value="ALOG"/>
</dbReference>
<dbReference type="InterPro" id="IPR006936">
    <property type="entry name" value="ALOG_dom"/>
</dbReference>
<dbReference type="PANTHER" id="PTHR31165">
    <property type="entry name" value="PROTEIN G1-LIKE2"/>
    <property type="match status" value="1"/>
</dbReference>
<dbReference type="PANTHER" id="PTHR31165:SF95">
    <property type="entry name" value="PROTEIN LIGHT-DEPENDENT SHORT HYPOCOTYLS 3"/>
    <property type="match status" value="1"/>
</dbReference>
<dbReference type="Pfam" id="PF04852">
    <property type="entry name" value="ALOG_dom"/>
    <property type="match status" value="1"/>
</dbReference>
<dbReference type="PROSITE" id="PS51697">
    <property type="entry name" value="ALOG"/>
    <property type="match status" value="1"/>
</dbReference>
<reference key="1">
    <citation type="journal article" date="2005" name="PLoS Biol.">
        <title>The genomes of Oryza sativa: a history of duplications.</title>
        <authorList>
            <person name="Yu J."/>
            <person name="Wang J."/>
            <person name="Lin W."/>
            <person name="Li S."/>
            <person name="Li H."/>
            <person name="Zhou J."/>
            <person name="Ni P."/>
            <person name="Dong W."/>
            <person name="Hu S."/>
            <person name="Zeng C."/>
            <person name="Zhang J."/>
            <person name="Zhang Y."/>
            <person name="Li R."/>
            <person name="Xu Z."/>
            <person name="Li S."/>
            <person name="Li X."/>
            <person name="Zheng H."/>
            <person name="Cong L."/>
            <person name="Lin L."/>
            <person name="Yin J."/>
            <person name="Geng J."/>
            <person name="Li G."/>
            <person name="Shi J."/>
            <person name="Liu J."/>
            <person name="Lv H."/>
            <person name="Li J."/>
            <person name="Wang J."/>
            <person name="Deng Y."/>
            <person name="Ran L."/>
            <person name="Shi X."/>
            <person name="Wang X."/>
            <person name="Wu Q."/>
            <person name="Li C."/>
            <person name="Ren X."/>
            <person name="Wang J."/>
            <person name="Wang X."/>
            <person name="Li D."/>
            <person name="Liu D."/>
            <person name="Zhang X."/>
            <person name="Ji Z."/>
            <person name="Zhao W."/>
            <person name="Sun Y."/>
            <person name="Zhang Z."/>
            <person name="Bao J."/>
            <person name="Han Y."/>
            <person name="Dong L."/>
            <person name="Ji J."/>
            <person name="Chen P."/>
            <person name="Wu S."/>
            <person name="Liu J."/>
            <person name="Xiao Y."/>
            <person name="Bu D."/>
            <person name="Tan J."/>
            <person name="Yang L."/>
            <person name="Ye C."/>
            <person name="Zhang J."/>
            <person name="Xu J."/>
            <person name="Zhou Y."/>
            <person name="Yu Y."/>
            <person name="Zhang B."/>
            <person name="Zhuang S."/>
            <person name="Wei H."/>
            <person name="Liu B."/>
            <person name="Lei M."/>
            <person name="Yu H."/>
            <person name="Li Y."/>
            <person name="Xu H."/>
            <person name="Wei S."/>
            <person name="He X."/>
            <person name="Fang L."/>
            <person name="Zhang Z."/>
            <person name="Zhang Y."/>
            <person name="Huang X."/>
            <person name="Su Z."/>
            <person name="Tong W."/>
            <person name="Li J."/>
            <person name="Tong Z."/>
            <person name="Li S."/>
            <person name="Ye J."/>
            <person name="Wang L."/>
            <person name="Fang L."/>
            <person name="Lei T."/>
            <person name="Chen C.-S."/>
            <person name="Chen H.-C."/>
            <person name="Xu Z."/>
            <person name="Li H."/>
            <person name="Huang H."/>
            <person name="Zhang F."/>
            <person name="Xu H."/>
            <person name="Li N."/>
            <person name="Zhao C."/>
            <person name="Li S."/>
            <person name="Dong L."/>
            <person name="Huang Y."/>
            <person name="Li L."/>
            <person name="Xi Y."/>
            <person name="Qi Q."/>
            <person name="Li W."/>
            <person name="Zhang B."/>
            <person name="Hu W."/>
            <person name="Zhang Y."/>
            <person name="Tian X."/>
            <person name="Jiao Y."/>
            <person name="Liang X."/>
            <person name="Jin J."/>
            <person name="Gao L."/>
            <person name="Zheng W."/>
            <person name="Hao B."/>
            <person name="Liu S.-M."/>
            <person name="Wang W."/>
            <person name="Yuan L."/>
            <person name="Cao M."/>
            <person name="McDermott J."/>
            <person name="Samudrala R."/>
            <person name="Wang J."/>
            <person name="Wong G.K.-S."/>
            <person name="Yang H."/>
        </authorList>
    </citation>
    <scope>NUCLEOTIDE SEQUENCE [LARGE SCALE GENOMIC DNA]</scope>
    <source>
        <strain>cv. 93-11</strain>
    </source>
</reference>
<gene>
    <name type="ORF">OsI_09389</name>
</gene>